<keyword id="KW-1003">Cell membrane</keyword>
<keyword id="KW-1015">Disulfide bond</keyword>
<keyword id="KW-0325">Glycoprotein</keyword>
<keyword id="KW-0393">Immunoglobulin domain</keyword>
<keyword id="KW-0472">Membrane</keyword>
<keyword id="KW-0675">Receptor</keyword>
<keyword id="KW-1185">Reference proteome</keyword>
<keyword id="KW-0677">Repeat</keyword>
<keyword id="KW-0732">Signal</keyword>
<keyword id="KW-0812">Transmembrane</keyword>
<keyword id="KW-1133">Transmembrane helix</keyword>
<proteinExistence type="evidence at transcript level"/>
<evidence type="ECO:0000250" key="1"/>
<evidence type="ECO:0000250" key="2">
    <source>
        <dbReference type="UniProtKB" id="P43629"/>
    </source>
</evidence>
<evidence type="ECO:0000255" key="3"/>
<evidence type="ECO:0000269" key="4">
    <source>
    </source>
</evidence>
<evidence type="ECO:0000305" key="5"/>
<evidence type="ECO:0000312" key="6">
    <source>
        <dbReference type="EMBL" id="AAN05414.1"/>
    </source>
</evidence>
<organism evidence="6">
    <name type="scientific">Mus musculus</name>
    <name type="common">Mouse</name>
    <dbReference type="NCBI Taxonomy" id="10090"/>
    <lineage>
        <taxon>Eukaryota</taxon>
        <taxon>Metazoa</taxon>
        <taxon>Chordata</taxon>
        <taxon>Craniata</taxon>
        <taxon>Vertebrata</taxon>
        <taxon>Euteleostomi</taxon>
        <taxon>Mammalia</taxon>
        <taxon>Eutheria</taxon>
        <taxon>Euarchontoglires</taxon>
        <taxon>Glires</taxon>
        <taxon>Rodentia</taxon>
        <taxon>Myomorpha</taxon>
        <taxon>Muroidea</taxon>
        <taxon>Muridae</taxon>
        <taxon>Murinae</taxon>
        <taxon>Mus</taxon>
        <taxon>Mus</taxon>
    </lineage>
</organism>
<sequence>MLLWFLSLVCSGFFLVQRMSAHVGSHDKPFLSAWPSYVVPLGQNVTLTCDSHRGSNIFKLYKEEGSPNHQLHETTFQKSQVFGPVTTEHAGTYRCFHPQYANVLSAHSEPLKIIISGIYMKPFLLILQSPLVDTGGNVTLECHSENMFDTYILISHRMGIIKNSVQVSAEHHESGSHVTYSIGPMTPDLVGTYTCYGANSYYPYEWSDSSDPIDIKITGVYKKPSLSALMGPVLMMSGETMALSCISDHQFDTFHMSREGVPRGQGMPAVQSHSGKFEAKFLLSPMIQKGNYRCYGSFRNASHVWSSPSDPLYLPAKGNCPAYTEADTKTNNYKNLHILTGLLVTMVLVVIIIFYSCYFSKQNKSQKQAAASMEQEYEVKNTINTQNFEGQERQEVTYTELEQRIFNQNLMPPISRISEFSADTIVYMEIMK</sequence>
<dbReference type="EMBL" id="AY130461">
    <property type="protein sequence ID" value="AAN05414.1"/>
    <property type="molecule type" value="mRNA"/>
</dbReference>
<dbReference type="SMR" id="P83555"/>
<dbReference type="FunCoup" id="P83555">
    <property type="interactions" value="101"/>
</dbReference>
<dbReference type="STRING" id="10090.ENSMUSP00000108729"/>
<dbReference type="GlyCosmos" id="P83555">
    <property type="glycosylation" value="3 sites, No reported glycans"/>
</dbReference>
<dbReference type="GlyGen" id="P83555">
    <property type="glycosylation" value="3 sites"/>
</dbReference>
<dbReference type="PaxDb" id="10090-ENSMUSP00000108729"/>
<dbReference type="PeptideAtlas" id="P83555"/>
<dbReference type="AGR" id="MGI:2652397"/>
<dbReference type="MGI" id="MGI:2652397">
    <property type="gene designation" value="Kir3dl1"/>
</dbReference>
<dbReference type="eggNOG" id="ENOG502RU21">
    <property type="taxonomic scope" value="Eukaryota"/>
</dbReference>
<dbReference type="InParanoid" id="P83555"/>
<dbReference type="PhylomeDB" id="P83555"/>
<dbReference type="Reactome" id="R-MMU-198933">
    <property type="pathway name" value="Immunoregulatory interactions between a Lymphoid and a non-Lymphoid cell"/>
</dbReference>
<dbReference type="Reactome" id="R-MMU-2172127">
    <property type="pathway name" value="DAP12 interactions"/>
</dbReference>
<dbReference type="PRO" id="PR:P83555"/>
<dbReference type="Proteomes" id="UP000000589">
    <property type="component" value="Unplaced"/>
</dbReference>
<dbReference type="RNAct" id="P83555">
    <property type="molecule type" value="protein"/>
</dbReference>
<dbReference type="GO" id="GO:0005886">
    <property type="term" value="C:plasma membrane"/>
    <property type="evidence" value="ECO:0007669"/>
    <property type="project" value="UniProtKB-SubCell"/>
</dbReference>
<dbReference type="FunFam" id="2.60.40.10:FF:000049">
    <property type="entry name" value="Leukocyte immunoglobulin-like receptor subfamily B member 1"/>
    <property type="match status" value="3"/>
</dbReference>
<dbReference type="Gene3D" id="2.60.40.10">
    <property type="entry name" value="Immunoglobulins"/>
    <property type="match status" value="3"/>
</dbReference>
<dbReference type="InterPro" id="IPR036179">
    <property type="entry name" value="Ig-like_dom_sf"/>
</dbReference>
<dbReference type="InterPro" id="IPR013783">
    <property type="entry name" value="Ig-like_fold"/>
</dbReference>
<dbReference type="InterPro" id="IPR050412">
    <property type="entry name" value="Ig-like_Receptors_ImmuneReg"/>
</dbReference>
<dbReference type="InterPro" id="IPR003599">
    <property type="entry name" value="Ig_sub"/>
</dbReference>
<dbReference type="InterPro" id="IPR013151">
    <property type="entry name" value="Immunoglobulin_dom"/>
</dbReference>
<dbReference type="PANTHER" id="PTHR11738:SF113">
    <property type="entry name" value="KILLER CELL IMMUNOGLOBULIN-LIKE RECEPTOR 2DL4"/>
    <property type="match status" value="1"/>
</dbReference>
<dbReference type="PANTHER" id="PTHR11738">
    <property type="entry name" value="MHC CLASS I NK CELL RECEPTOR"/>
    <property type="match status" value="1"/>
</dbReference>
<dbReference type="Pfam" id="PF00047">
    <property type="entry name" value="ig"/>
    <property type="match status" value="2"/>
</dbReference>
<dbReference type="SMART" id="SM00409">
    <property type="entry name" value="IG"/>
    <property type="match status" value="2"/>
</dbReference>
<dbReference type="SUPFAM" id="SSF48726">
    <property type="entry name" value="Immunoglobulin"/>
    <property type="match status" value="3"/>
</dbReference>
<name>KI3L1_MOUSE</name>
<reference evidence="5" key="1">
    <citation type="journal article" date="2003" name="J. Immunol.">
        <title>Molecular cloning of a killer cell Ig-like receptor in the mouse and rat.</title>
        <authorList>
            <person name="Hoelsbrekken S.E."/>
            <person name="Nylenna O."/>
            <person name="Saether P.C."/>
            <person name="Slettedal I.O."/>
            <person name="Ryan J.C."/>
            <person name="Fossum S."/>
            <person name="Dissen E."/>
        </authorList>
    </citation>
    <scope>NUCLEOTIDE SEQUENCE [MRNA]</scope>
    <source>
        <strain>C57BL/6J</strain>
        <tissue>Natural killer cell</tissue>
    </source>
</reference>
<comment type="function">
    <text evidence="2 4">Receptor on natural killer (NK) cells. Inhibits the activity of NK cells thus preventing cell lysis.</text>
</comment>
<comment type="subcellular location">
    <subcellularLocation>
        <location>Cell membrane</location>
        <topology>Single-pass type I membrane protein</topology>
    </subcellularLocation>
</comment>
<comment type="similarity">
    <text evidence="5">Belongs to the immunoglobulin superfamily.</text>
</comment>
<protein>
    <recommendedName>
        <fullName>Killer cell immunoglobulin-like receptor 3DL1</fullName>
    </recommendedName>
    <cdAntigenName>CD158e</cdAntigenName>
</protein>
<accession>P83555</accession>
<feature type="signal peptide" evidence="1">
    <location>
        <begin position="1"/>
        <end position="21"/>
    </location>
</feature>
<feature type="chain" id="PRO_0000015088" description="Killer cell immunoglobulin-like receptor 3DL1">
    <location>
        <begin position="22"/>
        <end position="432"/>
    </location>
</feature>
<feature type="topological domain" description="Extracellular" evidence="3">
    <location>
        <begin position="22"/>
        <end position="335"/>
    </location>
</feature>
<feature type="transmembrane region" description="Helical" evidence="3">
    <location>
        <begin position="336"/>
        <end position="356"/>
    </location>
</feature>
<feature type="topological domain" description="Cytoplasmic" evidence="3">
    <location>
        <begin position="357"/>
        <end position="432"/>
    </location>
</feature>
<feature type="domain" description="Ig-like C2-type 1">
    <location>
        <begin position="42"/>
        <end position="100"/>
    </location>
</feature>
<feature type="domain" description="Ig-like C2-type 2">
    <location>
        <begin position="135"/>
        <end position="202"/>
    </location>
</feature>
<feature type="domain" description="Ig-like C2-type 3">
    <location>
        <begin position="238"/>
        <end position="301"/>
    </location>
</feature>
<feature type="glycosylation site" description="N-linked (GlcNAc...) asparagine" evidence="3">
    <location>
        <position position="44"/>
    </location>
</feature>
<feature type="glycosylation site" description="N-linked (GlcNAc...) asparagine" evidence="3">
    <location>
        <position position="137"/>
    </location>
</feature>
<feature type="glycosylation site" description="N-linked (GlcNAc...) asparagine" evidence="3">
    <location>
        <position position="300"/>
    </location>
</feature>
<feature type="disulfide bond" evidence="1">
    <location>
        <begin position="49"/>
        <end position="95"/>
    </location>
</feature>
<feature type="disulfide bond" evidence="1">
    <location>
        <begin position="142"/>
        <end position="195"/>
    </location>
</feature>
<feature type="disulfide bond" evidence="1">
    <location>
        <begin position="245"/>
        <end position="294"/>
    </location>
</feature>
<gene>
    <name type="primary">Kir3dl1</name>
</gene>